<feature type="chain" id="PRO_0000149425" description="Adenine phosphoribosyltransferase">
    <location>
        <begin position="1"/>
        <end position="170"/>
    </location>
</feature>
<dbReference type="EC" id="2.4.2.7" evidence="1"/>
<dbReference type="EMBL" id="BA000028">
    <property type="protein sequence ID" value="BAC13981.1"/>
    <property type="molecule type" value="Genomic_DNA"/>
</dbReference>
<dbReference type="RefSeq" id="WP_011066420.1">
    <property type="nucleotide sequence ID" value="NC_004193.1"/>
</dbReference>
<dbReference type="SMR" id="Q8EPR5"/>
<dbReference type="STRING" id="221109.gene:10734271"/>
<dbReference type="KEGG" id="oih:OB2025"/>
<dbReference type="eggNOG" id="COG0503">
    <property type="taxonomic scope" value="Bacteria"/>
</dbReference>
<dbReference type="HOGENOM" id="CLU_063339_3_0_9"/>
<dbReference type="OrthoDB" id="9803963at2"/>
<dbReference type="PhylomeDB" id="Q8EPR5"/>
<dbReference type="UniPathway" id="UPA00588">
    <property type="reaction ID" value="UER00646"/>
</dbReference>
<dbReference type="Proteomes" id="UP000000822">
    <property type="component" value="Chromosome"/>
</dbReference>
<dbReference type="GO" id="GO:0005737">
    <property type="term" value="C:cytoplasm"/>
    <property type="evidence" value="ECO:0007669"/>
    <property type="project" value="UniProtKB-SubCell"/>
</dbReference>
<dbReference type="GO" id="GO:0002055">
    <property type="term" value="F:adenine binding"/>
    <property type="evidence" value="ECO:0007669"/>
    <property type="project" value="TreeGrafter"/>
</dbReference>
<dbReference type="GO" id="GO:0003999">
    <property type="term" value="F:adenine phosphoribosyltransferase activity"/>
    <property type="evidence" value="ECO:0007669"/>
    <property type="project" value="UniProtKB-UniRule"/>
</dbReference>
<dbReference type="GO" id="GO:0016208">
    <property type="term" value="F:AMP binding"/>
    <property type="evidence" value="ECO:0007669"/>
    <property type="project" value="TreeGrafter"/>
</dbReference>
<dbReference type="GO" id="GO:0006168">
    <property type="term" value="P:adenine salvage"/>
    <property type="evidence" value="ECO:0007669"/>
    <property type="project" value="InterPro"/>
</dbReference>
<dbReference type="GO" id="GO:0044209">
    <property type="term" value="P:AMP salvage"/>
    <property type="evidence" value="ECO:0007669"/>
    <property type="project" value="UniProtKB-UniRule"/>
</dbReference>
<dbReference type="GO" id="GO:0006166">
    <property type="term" value="P:purine ribonucleoside salvage"/>
    <property type="evidence" value="ECO:0007669"/>
    <property type="project" value="UniProtKB-KW"/>
</dbReference>
<dbReference type="CDD" id="cd06223">
    <property type="entry name" value="PRTases_typeI"/>
    <property type="match status" value="1"/>
</dbReference>
<dbReference type="FunFam" id="3.40.50.2020:FF:000004">
    <property type="entry name" value="Adenine phosphoribosyltransferase"/>
    <property type="match status" value="1"/>
</dbReference>
<dbReference type="Gene3D" id="3.40.50.2020">
    <property type="match status" value="1"/>
</dbReference>
<dbReference type="HAMAP" id="MF_00004">
    <property type="entry name" value="Aden_phosphoribosyltr"/>
    <property type="match status" value="1"/>
</dbReference>
<dbReference type="InterPro" id="IPR005764">
    <property type="entry name" value="Ade_phspho_trans"/>
</dbReference>
<dbReference type="InterPro" id="IPR000836">
    <property type="entry name" value="PRibTrfase_dom"/>
</dbReference>
<dbReference type="InterPro" id="IPR029057">
    <property type="entry name" value="PRTase-like"/>
</dbReference>
<dbReference type="InterPro" id="IPR050054">
    <property type="entry name" value="UPRTase/APRTase"/>
</dbReference>
<dbReference type="NCBIfam" id="TIGR01090">
    <property type="entry name" value="apt"/>
    <property type="match status" value="1"/>
</dbReference>
<dbReference type="NCBIfam" id="NF002633">
    <property type="entry name" value="PRK02304.1-2"/>
    <property type="match status" value="1"/>
</dbReference>
<dbReference type="NCBIfam" id="NF002634">
    <property type="entry name" value="PRK02304.1-3"/>
    <property type="match status" value="1"/>
</dbReference>
<dbReference type="NCBIfam" id="NF002636">
    <property type="entry name" value="PRK02304.1-5"/>
    <property type="match status" value="1"/>
</dbReference>
<dbReference type="PANTHER" id="PTHR32315">
    <property type="entry name" value="ADENINE PHOSPHORIBOSYLTRANSFERASE"/>
    <property type="match status" value="1"/>
</dbReference>
<dbReference type="PANTHER" id="PTHR32315:SF3">
    <property type="entry name" value="ADENINE PHOSPHORIBOSYLTRANSFERASE"/>
    <property type="match status" value="1"/>
</dbReference>
<dbReference type="Pfam" id="PF00156">
    <property type="entry name" value="Pribosyltran"/>
    <property type="match status" value="1"/>
</dbReference>
<dbReference type="SUPFAM" id="SSF53271">
    <property type="entry name" value="PRTase-like"/>
    <property type="match status" value="1"/>
</dbReference>
<name>APT_OCEIH</name>
<proteinExistence type="inferred from homology"/>
<reference key="1">
    <citation type="journal article" date="2002" name="Nucleic Acids Res.">
        <title>Genome sequence of Oceanobacillus iheyensis isolated from the Iheya Ridge and its unexpected adaptive capabilities to extreme environments.</title>
        <authorList>
            <person name="Takami H."/>
            <person name="Takaki Y."/>
            <person name="Uchiyama I."/>
        </authorList>
    </citation>
    <scope>NUCLEOTIDE SEQUENCE [LARGE SCALE GENOMIC DNA]</scope>
    <source>
        <strain>DSM 14371 / CIP 107618 / JCM 11309 / KCTC 3954 / HTE831</strain>
    </source>
</reference>
<gene>
    <name evidence="1" type="primary">apt</name>
    <name type="ordered locus">OB2025</name>
</gene>
<accession>Q8EPR5</accession>
<protein>
    <recommendedName>
        <fullName evidence="1">Adenine phosphoribosyltransferase</fullName>
        <shortName evidence="1">APRT</shortName>
        <ecNumber evidence="1">2.4.2.7</ecNumber>
    </recommendedName>
</protein>
<keyword id="KW-0963">Cytoplasm</keyword>
<keyword id="KW-0328">Glycosyltransferase</keyword>
<keyword id="KW-0660">Purine salvage</keyword>
<keyword id="KW-1185">Reference proteome</keyword>
<keyword id="KW-0808">Transferase</keyword>
<sequence length="170" mass="18730">MEFKNYIEIVEDWPKEGIKFKDITPLMADGKAFKSAVDEIVDYANTKEIDLVVGPEARGFIVGCPVSYALEVGFAPVRKEGKLPREVIKVDYGLEYGENVLTIHKDAIKPGQRVLITDDLLATGGTIEATIKLVEQLGGIVVGCAFLVELGYLDGKDKLEGYDVLTLMKY</sequence>
<organism>
    <name type="scientific">Oceanobacillus iheyensis (strain DSM 14371 / CIP 107618 / JCM 11309 / KCTC 3954 / HTE831)</name>
    <dbReference type="NCBI Taxonomy" id="221109"/>
    <lineage>
        <taxon>Bacteria</taxon>
        <taxon>Bacillati</taxon>
        <taxon>Bacillota</taxon>
        <taxon>Bacilli</taxon>
        <taxon>Bacillales</taxon>
        <taxon>Bacillaceae</taxon>
        <taxon>Oceanobacillus</taxon>
    </lineage>
</organism>
<evidence type="ECO:0000255" key="1">
    <source>
        <dbReference type="HAMAP-Rule" id="MF_00004"/>
    </source>
</evidence>
<comment type="function">
    <text evidence="1">Catalyzes a salvage reaction resulting in the formation of AMP, that is energically less costly than de novo synthesis.</text>
</comment>
<comment type="catalytic activity">
    <reaction evidence="1">
        <text>AMP + diphosphate = 5-phospho-alpha-D-ribose 1-diphosphate + adenine</text>
        <dbReference type="Rhea" id="RHEA:16609"/>
        <dbReference type="ChEBI" id="CHEBI:16708"/>
        <dbReference type="ChEBI" id="CHEBI:33019"/>
        <dbReference type="ChEBI" id="CHEBI:58017"/>
        <dbReference type="ChEBI" id="CHEBI:456215"/>
        <dbReference type="EC" id="2.4.2.7"/>
    </reaction>
</comment>
<comment type="pathway">
    <text evidence="1">Purine metabolism; AMP biosynthesis via salvage pathway; AMP from adenine: step 1/1.</text>
</comment>
<comment type="subunit">
    <text evidence="1">Homodimer.</text>
</comment>
<comment type="subcellular location">
    <subcellularLocation>
        <location evidence="1">Cytoplasm</location>
    </subcellularLocation>
</comment>
<comment type="similarity">
    <text evidence="1">Belongs to the purine/pyrimidine phosphoribosyltransferase family.</text>
</comment>